<feature type="chain" id="PRO_0000079653" description="30 kDa cell wall protein">
    <location>
        <begin position="1"/>
        <end position="15" status="greater than"/>
    </location>
</feature>
<feature type="non-terminal residue" evidence="2">
    <location>
        <position position="15"/>
    </location>
</feature>
<dbReference type="GO" id="GO:0005576">
    <property type="term" value="C:extracellular region"/>
    <property type="evidence" value="ECO:0007669"/>
    <property type="project" value="UniProtKB-KW"/>
</dbReference>
<evidence type="ECO:0000269" key="1">
    <source>
    </source>
</evidence>
<evidence type="ECO:0000303" key="2">
    <source>
    </source>
</evidence>
<evidence type="ECO:0000305" key="3"/>
<sequence>NFQRDVEITWGDMRR</sequence>
<comment type="subcellular location">
    <subcellularLocation>
        <location evidence="1">Secreted</location>
        <location evidence="1">Cell wall</location>
    </subcellularLocation>
</comment>
<reference evidence="3" key="1">
    <citation type="journal article" date="1997" name="J. Biol. Chem.">
        <title>Differential extraction and protein sequencing reveals major differences in patterns of primary cell wall proteins from plants.</title>
        <authorList>
            <person name="Robertson D."/>
            <person name="Mitchell G.P."/>
            <person name="Gilroy J.S."/>
            <person name="Gerrish C."/>
            <person name="Bolwell G.P."/>
            <person name="Slabas A.R."/>
        </authorList>
    </citation>
    <scope>PROTEIN SEQUENCE</scope>
    <scope>SUBCELLULAR LOCATION</scope>
    <source>
        <strain>cv. Landsberg erecta</strain>
    </source>
</reference>
<organism>
    <name type="scientific">Arabidopsis thaliana</name>
    <name type="common">Mouse-ear cress</name>
    <dbReference type="NCBI Taxonomy" id="3702"/>
    <lineage>
        <taxon>Eukaryota</taxon>
        <taxon>Viridiplantae</taxon>
        <taxon>Streptophyta</taxon>
        <taxon>Embryophyta</taxon>
        <taxon>Tracheophyta</taxon>
        <taxon>Spermatophyta</taxon>
        <taxon>Magnoliopsida</taxon>
        <taxon>eudicotyledons</taxon>
        <taxon>Gunneridae</taxon>
        <taxon>Pentapetalae</taxon>
        <taxon>rosids</taxon>
        <taxon>malvids</taxon>
        <taxon>Brassicales</taxon>
        <taxon>Brassicaceae</taxon>
        <taxon>Camelineae</taxon>
        <taxon>Arabidopsis</taxon>
    </lineage>
</organism>
<accession>P80853</accession>
<protein>
    <recommendedName>
        <fullName>30 kDa cell wall protein</fullName>
    </recommendedName>
</protein>
<keyword id="KW-0134">Cell wall</keyword>
<keyword id="KW-0903">Direct protein sequencing</keyword>
<keyword id="KW-0964">Secreted</keyword>
<proteinExistence type="evidence at protein level"/>
<name>CWP09_ARATH</name>